<gene>
    <name type="primary">Lax1</name>
    <name type="synonym">Lax</name>
</gene>
<reference key="1">
    <citation type="journal article" date="2002" name="J. Biol. Chem.">
        <title>Molecular cloning of a novel gene encoding a membrane-associated adaptor protein (LAX) in lymphocyte signaling.</title>
        <authorList>
            <person name="Zhu M."/>
            <person name="Janssen E."/>
            <person name="Leung K."/>
            <person name="Zhang W."/>
        </authorList>
    </citation>
    <scope>NUCLEOTIDE SEQUENCE [MRNA]</scope>
    <source>
        <strain>C57BL/6J</strain>
    </source>
</reference>
<reference key="2">
    <citation type="journal article" date="2005" name="Science">
        <title>The transcriptional landscape of the mammalian genome.</title>
        <authorList>
            <person name="Carninci P."/>
            <person name="Kasukawa T."/>
            <person name="Katayama S."/>
            <person name="Gough J."/>
            <person name="Frith M.C."/>
            <person name="Maeda N."/>
            <person name="Oyama R."/>
            <person name="Ravasi T."/>
            <person name="Lenhard B."/>
            <person name="Wells C."/>
            <person name="Kodzius R."/>
            <person name="Shimokawa K."/>
            <person name="Bajic V.B."/>
            <person name="Brenner S.E."/>
            <person name="Batalov S."/>
            <person name="Forrest A.R."/>
            <person name="Zavolan M."/>
            <person name="Davis M.J."/>
            <person name="Wilming L.G."/>
            <person name="Aidinis V."/>
            <person name="Allen J.E."/>
            <person name="Ambesi-Impiombato A."/>
            <person name="Apweiler R."/>
            <person name="Aturaliya R.N."/>
            <person name="Bailey T.L."/>
            <person name="Bansal M."/>
            <person name="Baxter L."/>
            <person name="Beisel K.W."/>
            <person name="Bersano T."/>
            <person name="Bono H."/>
            <person name="Chalk A.M."/>
            <person name="Chiu K.P."/>
            <person name="Choudhary V."/>
            <person name="Christoffels A."/>
            <person name="Clutterbuck D.R."/>
            <person name="Crowe M.L."/>
            <person name="Dalla E."/>
            <person name="Dalrymple B.P."/>
            <person name="de Bono B."/>
            <person name="Della Gatta G."/>
            <person name="di Bernardo D."/>
            <person name="Down T."/>
            <person name="Engstrom P."/>
            <person name="Fagiolini M."/>
            <person name="Faulkner G."/>
            <person name="Fletcher C.F."/>
            <person name="Fukushima T."/>
            <person name="Furuno M."/>
            <person name="Futaki S."/>
            <person name="Gariboldi M."/>
            <person name="Georgii-Hemming P."/>
            <person name="Gingeras T.R."/>
            <person name="Gojobori T."/>
            <person name="Green R.E."/>
            <person name="Gustincich S."/>
            <person name="Harbers M."/>
            <person name="Hayashi Y."/>
            <person name="Hensch T.K."/>
            <person name="Hirokawa N."/>
            <person name="Hill D."/>
            <person name="Huminiecki L."/>
            <person name="Iacono M."/>
            <person name="Ikeo K."/>
            <person name="Iwama A."/>
            <person name="Ishikawa T."/>
            <person name="Jakt M."/>
            <person name="Kanapin A."/>
            <person name="Katoh M."/>
            <person name="Kawasawa Y."/>
            <person name="Kelso J."/>
            <person name="Kitamura H."/>
            <person name="Kitano H."/>
            <person name="Kollias G."/>
            <person name="Krishnan S.P."/>
            <person name="Kruger A."/>
            <person name="Kummerfeld S.K."/>
            <person name="Kurochkin I.V."/>
            <person name="Lareau L.F."/>
            <person name="Lazarevic D."/>
            <person name="Lipovich L."/>
            <person name="Liu J."/>
            <person name="Liuni S."/>
            <person name="McWilliam S."/>
            <person name="Madan Babu M."/>
            <person name="Madera M."/>
            <person name="Marchionni L."/>
            <person name="Matsuda H."/>
            <person name="Matsuzawa S."/>
            <person name="Miki H."/>
            <person name="Mignone F."/>
            <person name="Miyake S."/>
            <person name="Morris K."/>
            <person name="Mottagui-Tabar S."/>
            <person name="Mulder N."/>
            <person name="Nakano N."/>
            <person name="Nakauchi H."/>
            <person name="Ng P."/>
            <person name="Nilsson R."/>
            <person name="Nishiguchi S."/>
            <person name="Nishikawa S."/>
            <person name="Nori F."/>
            <person name="Ohara O."/>
            <person name="Okazaki Y."/>
            <person name="Orlando V."/>
            <person name="Pang K.C."/>
            <person name="Pavan W.J."/>
            <person name="Pavesi G."/>
            <person name="Pesole G."/>
            <person name="Petrovsky N."/>
            <person name="Piazza S."/>
            <person name="Reed J."/>
            <person name="Reid J.F."/>
            <person name="Ring B.Z."/>
            <person name="Ringwald M."/>
            <person name="Rost B."/>
            <person name="Ruan Y."/>
            <person name="Salzberg S.L."/>
            <person name="Sandelin A."/>
            <person name="Schneider C."/>
            <person name="Schoenbach C."/>
            <person name="Sekiguchi K."/>
            <person name="Semple C.A."/>
            <person name="Seno S."/>
            <person name="Sessa L."/>
            <person name="Sheng Y."/>
            <person name="Shibata Y."/>
            <person name="Shimada H."/>
            <person name="Shimada K."/>
            <person name="Silva D."/>
            <person name="Sinclair B."/>
            <person name="Sperling S."/>
            <person name="Stupka E."/>
            <person name="Sugiura K."/>
            <person name="Sultana R."/>
            <person name="Takenaka Y."/>
            <person name="Taki K."/>
            <person name="Tammoja K."/>
            <person name="Tan S.L."/>
            <person name="Tang S."/>
            <person name="Taylor M.S."/>
            <person name="Tegner J."/>
            <person name="Teichmann S.A."/>
            <person name="Ueda H.R."/>
            <person name="van Nimwegen E."/>
            <person name="Verardo R."/>
            <person name="Wei C.L."/>
            <person name="Yagi K."/>
            <person name="Yamanishi H."/>
            <person name="Zabarovsky E."/>
            <person name="Zhu S."/>
            <person name="Zimmer A."/>
            <person name="Hide W."/>
            <person name="Bult C."/>
            <person name="Grimmond S.M."/>
            <person name="Teasdale R.D."/>
            <person name="Liu E.T."/>
            <person name="Brusic V."/>
            <person name="Quackenbush J."/>
            <person name="Wahlestedt C."/>
            <person name="Mattick J.S."/>
            <person name="Hume D.A."/>
            <person name="Kai C."/>
            <person name="Sasaki D."/>
            <person name="Tomaru Y."/>
            <person name="Fukuda S."/>
            <person name="Kanamori-Katayama M."/>
            <person name="Suzuki M."/>
            <person name="Aoki J."/>
            <person name="Arakawa T."/>
            <person name="Iida J."/>
            <person name="Imamura K."/>
            <person name="Itoh M."/>
            <person name="Kato T."/>
            <person name="Kawaji H."/>
            <person name="Kawagashira N."/>
            <person name="Kawashima T."/>
            <person name="Kojima M."/>
            <person name="Kondo S."/>
            <person name="Konno H."/>
            <person name="Nakano K."/>
            <person name="Ninomiya N."/>
            <person name="Nishio T."/>
            <person name="Okada M."/>
            <person name="Plessy C."/>
            <person name="Shibata K."/>
            <person name="Shiraki T."/>
            <person name="Suzuki S."/>
            <person name="Tagami M."/>
            <person name="Waki K."/>
            <person name="Watahiki A."/>
            <person name="Okamura-Oho Y."/>
            <person name="Suzuki H."/>
            <person name="Kawai J."/>
            <person name="Hayashizaki Y."/>
        </authorList>
    </citation>
    <scope>NUCLEOTIDE SEQUENCE [LARGE SCALE MRNA]</scope>
    <source>
        <strain>C57BL/6J</strain>
        <strain>NOD</strain>
        <tissue>Aorta</tissue>
        <tissue>Thymus</tissue>
    </source>
</reference>
<reference key="3">
    <citation type="journal article" date="2004" name="Genome Res.">
        <title>The status, quality, and expansion of the NIH full-length cDNA project: the Mammalian Gene Collection (MGC).</title>
        <authorList>
            <consortium name="The MGC Project Team"/>
        </authorList>
    </citation>
    <scope>NUCLEOTIDE SEQUENCE [LARGE SCALE MRNA]</scope>
    <source>
        <strain>FVB/N</strain>
        <tissue>Salivary gland</tissue>
    </source>
</reference>
<reference key="4">
    <citation type="journal article" date="2005" name="J. Immunol.">
        <title>Negative regulation of lymphocyte activation by the adaptor protein LAX.</title>
        <authorList>
            <person name="Zhu M."/>
            <person name="Granillo O."/>
            <person name="Wen R."/>
            <person name="Yang K."/>
            <person name="Dai X."/>
            <person name="Wang D."/>
            <person name="Zhang W."/>
        </authorList>
    </citation>
    <scope>INDUCTION</scope>
    <scope>TISSUE SPECIFICITY</scope>
    <scope>FUNCTION</scope>
    <scope>DISRUPTION PHENOTYPE</scope>
</reference>
<name>LAX1_MOUSE</name>
<accession>Q8BHB3</accession>
<accession>Q8BS18</accession>
<accession>Q8CGV1</accession>
<protein>
    <recommendedName>
        <fullName>Lymphocyte transmembrane adapter 1</fullName>
    </recommendedName>
    <alternativeName>
        <fullName>Linker for activation of X cells</fullName>
    </alternativeName>
    <alternativeName>
        <fullName>Membrane-associated adapter protein LAX</fullName>
    </alternativeName>
</protein>
<proteinExistence type="evidence at transcript level"/>
<organism>
    <name type="scientific">Mus musculus</name>
    <name type="common">Mouse</name>
    <dbReference type="NCBI Taxonomy" id="10090"/>
    <lineage>
        <taxon>Eukaryota</taxon>
        <taxon>Metazoa</taxon>
        <taxon>Chordata</taxon>
        <taxon>Craniata</taxon>
        <taxon>Vertebrata</taxon>
        <taxon>Euteleostomi</taxon>
        <taxon>Mammalia</taxon>
        <taxon>Eutheria</taxon>
        <taxon>Euarchontoglires</taxon>
        <taxon>Glires</taxon>
        <taxon>Rodentia</taxon>
        <taxon>Myomorpha</taxon>
        <taxon>Muroidea</taxon>
        <taxon>Muridae</taxon>
        <taxon>Murinae</taxon>
        <taxon>Mus</taxon>
        <taxon>Mus</taxon>
    </lineage>
</organism>
<feature type="chain" id="PRO_0000083330" description="Lymphocyte transmembrane adapter 1">
    <location>
        <begin position="1"/>
        <end position="407"/>
    </location>
</feature>
<feature type="topological domain" description="Extracellular" evidence="3">
    <location>
        <begin position="1"/>
        <end position="33"/>
    </location>
</feature>
<feature type="transmembrane region" description="Helical; Signal-anchor for type III membrane protein" evidence="3">
    <location>
        <begin position="34"/>
        <end position="54"/>
    </location>
</feature>
<feature type="topological domain" description="Cytoplasmic" evidence="3">
    <location>
        <begin position="55"/>
        <end position="407"/>
    </location>
</feature>
<feature type="region of interest" description="Disordered" evidence="4">
    <location>
        <begin position="1"/>
        <end position="25"/>
    </location>
</feature>
<feature type="region of interest" description="Disordered" evidence="4">
    <location>
        <begin position="109"/>
        <end position="131"/>
    </location>
</feature>
<feature type="region of interest" description="Disordered" evidence="4">
    <location>
        <begin position="331"/>
        <end position="388"/>
    </location>
</feature>
<feature type="compositionally biased region" description="Polar residues" evidence="4">
    <location>
        <begin position="16"/>
        <end position="25"/>
    </location>
</feature>
<feature type="modified residue" description="Phosphotyrosine" evidence="2">
    <location>
        <position position="185"/>
    </location>
</feature>
<feature type="modified residue" description="Phosphotyrosine" evidence="2">
    <location>
        <position position="260"/>
    </location>
</feature>
<feature type="modified residue" description="Phosphotyrosine" evidence="2">
    <location>
        <position position="286"/>
    </location>
</feature>
<feature type="modified residue" description="Phosphotyrosine" evidence="2">
    <location>
        <position position="353"/>
    </location>
</feature>
<feature type="sequence conflict" description="In Ref. 2; BAC40394 and 3; AAH42765." evidence="6" ref="2 3">
    <original>P</original>
    <variation>S</variation>
    <location>
        <position position="67"/>
    </location>
</feature>
<feature type="sequence conflict" description="In Ref. 2; BAC40394 and 3; AAH42765." evidence="6" ref="2 3">
    <original>N</original>
    <variation>D</variation>
    <location>
        <position position="145"/>
    </location>
</feature>
<feature type="sequence conflict" description="In Ref. 2; BAC30715." evidence="6" ref="2">
    <original>A</original>
    <variation>V</variation>
    <location>
        <position position="230"/>
    </location>
</feature>
<feature type="sequence conflict" description="In Ref. 2; BAC40394 and 3; AAH42765." evidence="6" ref="2 3">
    <original>R</original>
    <variation>G</variation>
    <location>
        <position position="342"/>
    </location>
</feature>
<comment type="function">
    <text evidence="5">Negatively regulates TCR (T-cell antigen receptor)-mediated signaling in T-cells and BCR (B-cell antigen receptor)-mediated signaling in B-cells.</text>
</comment>
<comment type="subunit">
    <text evidence="1">When phosphorylated, interacts with GRB2, PIK3R1 and GRAP2.</text>
</comment>
<comment type="subcellular location">
    <subcellularLocation>
        <location evidence="1">Cell membrane</location>
        <topology evidence="1">Single-pass type III membrane protein</topology>
    </subcellularLocation>
</comment>
<comment type="tissue specificity">
    <text evidence="5">Expressed in T-cells and B-cells.</text>
</comment>
<comment type="induction">
    <text evidence="5">Up-regulated in T- and B-cells following TCR and BCR engagement, respectively.</text>
</comment>
<comment type="PTM">
    <text evidence="1">Phosphorylated on tyrosines upon TCR or BCR activation; which leads to the recruitment of GRB2, PIK3R1 and GRAP2.</text>
</comment>
<comment type="disruption phenotype">
    <text evidence="5">Mice are viable, fertile and healthy, and show normal lymphocyte development. However, their T- and B-cells are hyperresponsive to stimulation via TCR or BCR.</text>
</comment>
<dbReference type="EMBL" id="AY090785">
    <property type="protein sequence ID" value="AAM09819.1"/>
    <property type="molecule type" value="mRNA"/>
</dbReference>
<dbReference type="EMBL" id="AK040834">
    <property type="protein sequence ID" value="BAC30715.1"/>
    <property type="molecule type" value="mRNA"/>
</dbReference>
<dbReference type="EMBL" id="AK088503">
    <property type="protein sequence ID" value="BAC40394.1"/>
    <property type="molecule type" value="mRNA"/>
</dbReference>
<dbReference type="EMBL" id="BC042765">
    <property type="protein sequence ID" value="AAH42765.1"/>
    <property type="molecule type" value="mRNA"/>
</dbReference>
<dbReference type="CCDS" id="CCDS35711.1"/>
<dbReference type="RefSeq" id="NP_001153121.1">
    <property type="nucleotide sequence ID" value="NM_001159649.1"/>
</dbReference>
<dbReference type="RefSeq" id="NP_766430.3">
    <property type="nucleotide sequence ID" value="NM_172842.3"/>
</dbReference>
<dbReference type="RefSeq" id="XP_006529620.1">
    <property type="nucleotide sequence ID" value="XM_006529557.5"/>
</dbReference>
<dbReference type="FunCoup" id="Q8BHB3">
    <property type="interactions" value="385"/>
</dbReference>
<dbReference type="IntAct" id="Q8BHB3">
    <property type="interactions" value="1"/>
</dbReference>
<dbReference type="STRING" id="10090.ENSMUSP00000131126"/>
<dbReference type="GlyGen" id="Q8BHB3">
    <property type="glycosylation" value="2 sites"/>
</dbReference>
<dbReference type="iPTMnet" id="Q8BHB3"/>
<dbReference type="PhosphoSitePlus" id="Q8BHB3"/>
<dbReference type="PaxDb" id="10090-ENSMUSP00000131126"/>
<dbReference type="ProteomicsDB" id="264978"/>
<dbReference type="Antibodypedia" id="1184">
    <property type="antibodies" value="241 antibodies from 29 providers"/>
</dbReference>
<dbReference type="DNASU" id="240754"/>
<dbReference type="Ensembl" id="ENSMUST00000169295.8">
    <property type="protein sequence ID" value="ENSMUSP00000131126.2"/>
    <property type="gene ID" value="ENSMUSG00000051998.15"/>
</dbReference>
<dbReference type="GeneID" id="240754"/>
<dbReference type="KEGG" id="mmu:240754"/>
<dbReference type="UCSC" id="uc007cqs.2">
    <property type="organism name" value="mouse"/>
</dbReference>
<dbReference type="AGR" id="MGI:2443362"/>
<dbReference type="CTD" id="54900"/>
<dbReference type="MGI" id="MGI:2443362">
    <property type="gene designation" value="Lax1"/>
</dbReference>
<dbReference type="VEuPathDB" id="HostDB:ENSMUSG00000051998"/>
<dbReference type="eggNOG" id="ENOG502SP30">
    <property type="taxonomic scope" value="Eukaryota"/>
</dbReference>
<dbReference type="GeneTree" id="ENSGT00390000014063"/>
<dbReference type="HOGENOM" id="CLU_058345_0_0_1"/>
<dbReference type="InParanoid" id="Q8BHB3"/>
<dbReference type="OMA" id="RDYINVP"/>
<dbReference type="OrthoDB" id="9449526at2759"/>
<dbReference type="PhylomeDB" id="Q8BHB3"/>
<dbReference type="TreeFam" id="TF337411"/>
<dbReference type="BioGRID-ORCS" id="240754">
    <property type="hits" value="0 hits in 75 CRISPR screens"/>
</dbReference>
<dbReference type="PRO" id="PR:Q8BHB3"/>
<dbReference type="Proteomes" id="UP000000589">
    <property type="component" value="Chromosome 1"/>
</dbReference>
<dbReference type="RNAct" id="Q8BHB3">
    <property type="molecule type" value="protein"/>
</dbReference>
<dbReference type="Bgee" id="ENSMUSG00000051998">
    <property type="expression patterns" value="Expressed in mesenteric lymph node and 43 other cell types or tissues"/>
</dbReference>
<dbReference type="ExpressionAtlas" id="Q8BHB3">
    <property type="expression patterns" value="baseline and differential"/>
</dbReference>
<dbReference type="GO" id="GO:0005829">
    <property type="term" value="C:cytosol"/>
    <property type="evidence" value="ECO:0007669"/>
    <property type="project" value="Ensembl"/>
</dbReference>
<dbReference type="GO" id="GO:0005794">
    <property type="term" value="C:Golgi apparatus"/>
    <property type="evidence" value="ECO:0007669"/>
    <property type="project" value="Ensembl"/>
</dbReference>
<dbReference type="GO" id="GO:0005886">
    <property type="term" value="C:plasma membrane"/>
    <property type="evidence" value="ECO:0007669"/>
    <property type="project" value="UniProtKB-SubCell"/>
</dbReference>
<dbReference type="GO" id="GO:0019901">
    <property type="term" value="F:protein kinase binding"/>
    <property type="evidence" value="ECO:0007669"/>
    <property type="project" value="Ensembl"/>
</dbReference>
<dbReference type="GO" id="GO:0042169">
    <property type="term" value="F:SH2 domain binding"/>
    <property type="evidence" value="ECO:0007669"/>
    <property type="project" value="Ensembl"/>
</dbReference>
<dbReference type="GO" id="GO:0002250">
    <property type="term" value="P:adaptive immune response"/>
    <property type="evidence" value="ECO:0007669"/>
    <property type="project" value="UniProtKB-KW"/>
</dbReference>
<dbReference type="GO" id="GO:0050851">
    <property type="term" value="P:antigen receptor-mediated signaling pathway"/>
    <property type="evidence" value="ECO:0000315"/>
    <property type="project" value="MGI"/>
</dbReference>
<dbReference type="GO" id="GO:0042113">
    <property type="term" value="P:B cell activation"/>
    <property type="evidence" value="ECO:0007669"/>
    <property type="project" value="Ensembl"/>
</dbReference>
<dbReference type="GO" id="GO:0035556">
    <property type="term" value="P:intracellular signal transduction"/>
    <property type="evidence" value="ECO:0007669"/>
    <property type="project" value="Ensembl"/>
</dbReference>
<dbReference type="GO" id="GO:0046649">
    <property type="term" value="P:lymphocyte activation"/>
    <property type="evidence" value="ECO:0000315"/>
    <property type="project" value="MGI"/>
</dbReference>
<dbReference type="GO" id="GO:0043409">
    <property type="term" value="P:negative regulation of MAPK cascade"/>
    <property type="evidence" value="ECO:0007669"/>
    <property type="project" value="Ensembl"/>
</dbReference>
<dbReference type="GO" id="GO:0050868">
    <property type="term" value="P:negative regulation of T cell activation"/>
    <property type="evidence" value="ECO:0007669"/>
    <property type="project" value="Ensembl"/>
</dbReference>
<dbReference type="InterPro" id="IPR031393">
    <property type="entry name" value="LAX"/>
</dbReference>
<dbReference type="PANTHER" id="PTHR24091">
    <property type="entry name" value="LYMPHOCYTE TRANSMEMBRANE ADAPTER 1"/>
    <property type="match status" value="1"/>
</dbReference>
<dbReference type="PANTHER" id="PTHR24091:SF0">
    <property type="entry name" value="LYMPHOCYTE TRANSMEMBRANE ADAPTER 1"/>
    <property type="match status" value="1"/>
</dbReference>
<dbReference type="Pfam" id="PF15681">
    <property type="entry name" value="LAX"/>
    <property type="match status" value="1"/>
</dbReference>
<keyword id="KW-1064">Adaptive immunity</keyword>
<keyword id="KW-1003">Cell membrane</keyword>
<keyword id="KW-0391">Immunity</keyword>
<keyword id="KW-0472">Membrane</keyword>
<keyword id="KW-0597">Phosphoprotein</keyword>
<keyword id="KW-1185">Reference proteome</keyword>
<keyword id="KW-0735">Signal-anchor</keyword>
<keyword id="KW-0812">Transmembrane</keyword>
<keyword id="KW-1133">Transmembrane helix</keyword>
<sequence>MYSTPAPPEVTRRNSEPSTRQGTLGSLQGEKGQIIFPGFVVLLTIILVIIAACILWSWKKQKKRPVPYFQVAPSLTLPPPRHRAKNIYDFLPRQQTELGRHQLSGFSTESLLSRASDSPEPEAPQANGSLQMHRVSVHTVEYSVNIYDNGTVPQMCRHLASSTHHVCVRTSRSNPSISSKESNDYVNIPTVEDTCETLTRIESTPENHLGLPSALRLEFAEGGHAGCGNATDHDGFWAPGPKCSDSLSDGDDLSQTSNDYVNMTGLDLENIQENRPRGAFQCCRDYENVPWVDTNESQLPTLEEVASSTVDHREPVWRTLSSVYHMAFQPSAQSEDSAMVHREEQSSEDSSDYETVLVAELEGRDWKQGPGTQHPSDEGTPGDLAGKLCEVVYPAGSLATETSDEDA</sequence>
<evidence type="ECO:0000250" key="1"/>
<evidence type="ECO:0000250" key="2">
    <source>
        <dbReference type="UniProtKB" id="Q8IWV1"/>
    </source>
</evidence>
<evidence type="ECO:0000255" key="3"/>
<evidence type="ECO:0000256" key="4">
    <source>
        <dbReference type="SAM" id="MobiDB-lite"/>
    </source>
</evidence>
<evidence type="ECO:0000269" key="5">
    <source>
    </source>
</evidence>
<evidence type="ECO:0000305" key="6"/>